<dbReference type="EMBL" id="AE014075">
    <property type="protein sequence ID" value="AAN83648.1"/>
    <property type="molecule type" value="Genomic_DNA"/>
</dbReference>
<dbReference type="RefSeq" id="WP_001026276.1">
    <property type="nucleotide sequence ID" value="NZ_CP051263.1"/>
</dbReference>
<dbReference type="SMR" id="P0A6G0"/>
<dbReference type="STRING" id="199310.c5226"/>
<dbReference type="KEGG" id="ecc:c5226"/>
<dbReference type="eggNOG" id="COG0234">
    <property type="taxonomic scope" value="Bacteria"/>
</dbReference>
<dbReference type="HOGENOM" id="CLU_132825_1_1_6"/>
<dbReference type="BioCyc" id="ECOL199310:C5226-MONOMER"/>
<dbReference type="Proteomes" id="UP000001410">
    <property type="component" value="Chromosome"/>
</dbReference>
<dbReference type="GO" id="GO:0005737">
    <property type="term" value="C:cytoplasm"/>
    <property type="evidence" value="ECO:0007669"/>
    <property type="project" value="UniProtKB-SubCell"/>
</dbReference>
<dbReference type="GO" id="GO:0005524">
    <property type="term" value="F:ATP binding"/>
    <property type="evidence" value="ECO:0007669"/>
    <property type="project" value="InterPro"/>
</dbReference>
<dbReference type="GO" id="GO:0046872">
    <property type="term" value="F:metal ion binding"/>
    <property type="evidence" value="ECO:0007669"/>
    <property type="project" value="TreeGrafter"/>
</dbReference>
<dbReference type="GO" id="GO:0044183">
    <property type="term" value="F:protein folding chaperone"/>
    <property type="evidence" value="ECO:0007669"/>
    <property type="project" value="InterPro"/>
</dbReference>
<dbReference type="GO" id="GO:0051087">
    <property type="term" value="F:protein-folding chaperone binding"/>
    <property type="evidence" value="ECO:0007669"/>
    <property type="project" value="TreeGrafter"/>
</dbReference>
<dbReference type="GO" id="GO:0051082">
    <property type="term" value="F:unfolded protein binding"/>
    <property type="evidence" value="ECO:0007669"/>
    <property type="project" value="TreeGrafter"/>
</dbReference>
<dbReference type="GO" id="GO:0051085">
    <property type="term" value="P:chaperone cofactor-dependent protein refolding"/>
    <property type="evidence" value="ECO:0007669"/>
    <property type="project" value="TreeGrafter"/>
</dbReference>
<dbReference type="CDD" id="cd00320">
    <property type="entry name" value="cpn10"/>
    <property type="match status" value="1"/>
</dbReference>
<dbReference type="FunFam" id="2.30.33.40:FF:000001">
    <property type="entry name" value="10 kDa chaperonin"/>
    <property type="match status" value="1"/>
</dbReference>
<dbReference type="Gene3D" id="2.30.33.40">
    <property type="entry name" value="GroES chaperonin"/>
    <property type="match status" value="1"/>
</dbReference>
<dbReference type="HAMAP" id="MF_00580">
    <property type="entry name" value="CH10"/>
    <property type="match status" value="1"/>
</dbReference>
<dbReference type="InterPro" id="IPR020818">
    <property type="entry name" value="Chaperonin_GroES"/>
</dbReference>
<dbReference type="InterPro" id="IPR037124">
    <property type="entry name" value="Chaperonin_GroES_sf"/>
</dbReference>
<dbReference type="InterPro" id="IPR018369">
    <property type="entry name" value="Chaprnonin_Cpn10_CS"/>
</dbReference>
<dbReference type="InterPro" id="IPR011032">
    <property type="entry name" value="GroES-like_sf"/>
</dbReference>
<dbReference type="NCBIfam" id="NF001526">
    <property type="entry name" value="PRK00364.1-1"/>
    <property type="match status" value="1"/>
</dbReference>
<dbReference type="NCBIfam" id="NF001527">
    <property type="entry name" value="PRK00364.1-2"/>
    <property type="match status" value="1"/>
</dbReference>
<dbReference type="NCBIfam" id="NF001531">
    <property type="entry name" value="PRK00364.2-2"/>
    <property type="match status" value="1"/>
</dbReference>
<dbReference type="PANTHER" id="PTHR10772">
    <property type="entry name" value="10 KDA HEAT SHOCK PROTEIN"/>
    <property type="match status" value="1"/>
</dbReference>
<dbReference type="PANTHER" id="PTHR10772:SF58">
    <property type="entry name" value="CO-CHAPERONIN GROES"/>
    <property type="match status" value="1"/>
</dbReference>
<dbReference type="Pfam" id="PF00166">
    <property type="entry name" value="Cpn10"/>
    <property type="match status" value="1"/>
</dbReference>
<dbReference type="PRINTS" id="PR00297">
    <property type="entry name" value="CHAPERONIN10"/>
</dbReference>
<dbReference type="SMART" id="SM00883">
    <property type="entry name" value="Cpn10"/>
    <property type="match status" value="1"/>
</dbReference>
<dbReference type="SUPFAM" id="SSF50129">
    <property type="entry name" value="GroES-like"/>
    <property type="match status" value="1"/>
</dbReference>
<dbReference type="PROSITE" id="PS00681">
    <property type="entry name" value="CHAPERONINS_CPN10"/>
    <property type="match status" value="1"/>
</dbReference>
<comment type="function">
    <text evidence="1">Together with the chaperonin GroEL, plays an essential role in assisting protein folding. The GroEL-GroES system forms a nano-cage that allows encapsulation of the non-native substrate proteins and provides a physical environment optimized to promote and accelerate protein folding. GroES binds to the apical surface of the GroEL ring, thereby capping the opening of the GroEL channel.</text>
</comment>
<comment type="subunit">
    <text evidence="1">Heptamer of 7 subunits arranged in a ring. Interacts with the chaperonin GroEL.</text>
</comment>
<comment type="subcellular location">
    <subcellularLocation>
        <location evidence="1">Cytoplasm</location>
    </subcellularLocation>
</comment>
<comment type="similarity">
    <text evidence="1 2">Belongs to the GroES chaperonin family.</text>
</comment>
<organism>
    <name type="scientific">Escherichia coli O6:H1 (strain CFT073 / ATCC 700928 / UPEC)</name>
    <dbReference type="NCBI Taxonomy" id="199310"/>
    <lineage>
        <taxon>Bacteria</taxon>
        <taxon>Pseudomonadati</taxon>
        <taxon>Pseudomonadota</taxon>
        <taxon>Gammaproteobacteria</taxon>
        <taxon>Enterobacterales</taxon>
        <taxon>Enterobacteriaceae</taxon>
        <taxon>Escherichia</taxon>
    </lineage>
</organism>
<reference key="1">
    <citation type="journal article" date="2002" name="Proc. Natl. Acad. Sci. U.S.A.">
        <title>Extensive mosaic structure revealed by the complete genome sequence of uropathogenic Escherichia coli.</title>
        <authorList>
            <person name="Welch R.A."/>
            <person name="Burland V."/>
            <person name="Plunkett G. III"/>
            <person name="Redford P."/>
            <person name="Roesch P."/>
            <person name="Rasko D."/>
            <person name="Buckles E.L."/>
            <person name="Liou S.-R."/>
            <person name="Boutin A."/>
            <person name="Hackett J."/>
            <person name="Stroud D."/>
            <person name="Mayhew G.F."/>
            <person name="Rose D.J."/>
            <person name="Zhou S."/>
            <person name="Schwartz D.C."/>
            <person name="Perna N.T."/>
            <person name="Mobley H.L.T."/>
            <person name="Donnenberg M.S."/>
            <person name="Blattner F.R."/>
        </authorList>
    </citation>
    <scope>NUCLEOTIDE SEQUENCE [LARGE SCALE GENOMIC DNA]</scope>
    <source>
        <strain>CFT073 / ATCC 700928 / UPEC</strain>
    </source>
</reference>
<keyword id="KW-0143">Chaperone</keyword>
<keyword id="KW-0963">Cytoplasm</keyword>
<keyword id="KW-1185">Reference proteome</keyword>
<proteinExistence type="inferred from homology"/>
<feature type="chain" id="PRO_0000174747" description="Co-chaperonin GroES">
    <location>
        <begin position="1"/>
        <end position="97"/>
    </location>
</feature>
<accession>P0A6G0</accession>
<accession>P05380</accession>
<evidence type="ECO:0000255" key="1">
    <source>
        <dbReference type="HAMAP-Rule" id="MF_00580"/>
    </source>
</evidence>
<evidence type="ECO:0000305" key="2"/>
<protein>
    <recommendedName>
        <fullName evidence="1">Co-chaperonin GroES</fullName>
    </recommendedName>
    <alternativeName>
        <fullName evidence="1">10 kDa chaperonin</fullName>
    </alternativeName>
    <alternativeName>
        <fullName evidence="1">Chaperonin-10</fullName>
        <shortName evidence="1">Cpn10</shortName>
    </alternativeName>
</protein>
<gene>
    <name evidence="1" type="primary">groES</name>
    <name evidence="1" type="synonym">groS</name>
    <name type="synonym">mopB</name>
    <name type="ordered locus">c5226</name>
</gene>
<sequence>MNIRPLHDRVIVKRKEVETKSAGGIVLTGSAAAKSTRGEVLAVGNGRILENGEVKPLDVKVGDIVIFNDGYGVKSEKIDNEEVLIMSESDILAIVEA</sequence>
<name>CH10_ECOL6</name>